<name>ATPE_PHATC</name>
<geneLocation type="chloroplast"/>
<protein>
    <recommendedName>
        <fullName evidence="1">ATP synthase epsilon chain, chloroplastic</fullName>
    </recommendedName>
    <alternativeName>
        <fullName evidence="1">ATP synthase F1 sector epsilon subunit</fullName>
    </alternativeName>
    <alternativeName>
        <fullName evidence="1">F-ATPase epsilon subunit</fullName>
    </alternativeName>
</protein>
<sequence length="133" mass="14354">MVMNIRVLTPDRVICSTTADEVVLPGLTGQVGVLDGHAALITALETGLLRIKLNDKWTPIILCGGLAEIDRDRVTVLVNDVEELTDIGLSEATQELEKATLAVENAKTSKERLDASVELKKATARLEAVNYLS</sequence>
<accession>A0T0D1</accession>
<dbReference type="EMBL" id="EF067920">
    <property type="protein sequence ID" value="ABK20629.1"/>
    <property type="molecule type" value="Genomic_DNA"/>
</dbReference>
<dbReference type="RefSeq" id="YP_874406.1">
    <property type="nucleotide sequence ID" value="NC_008588.1"/>
</dbReference>
<dbReference type="SMR" id="A0T0D1"/>
<dbReference type="STRING" id="556484.A0T0D1"/>
<dbReference type="GeneID" id="4524603"/>
<dbReference type="InParanoid" id="A0T0D1"/>
<dbReference type="Proteomes" id="UP000000759">
    <property type="component" value="Chloroplast"/>
</dbReference>
<dbReference type="GO" id="GO:0009535">
    <property type="term" value="C:chloroplast thylakoid membrane"/>
    <property type="evidence" value="ECO:0007669"/>
    <property type="project" value="UniProtKB-SubCell"/>
</dbReference>
<dbReference type="GO" id="GO:0045259">
    <property type="term" value="C:proton-transporting ATP synthase complex"/>
    <property type="evidence" value="ECO:0007669"/>
    <property type="project" value="UniProtKB-KW"/>
</dbReference>
<dbReference type="GO" id="GO:0005524">
    <property type="term" value="F:ATP binding"/>
    <property type="evidence" value="ECO:0007669"/>
    <property type="project" value="UniProtKB-UniRule"/>
</dbReference>
<dbReference type="GO" id="GO:0046933">
    <property type="term" value="F:proton-transporting ATP synthase activity, rotational mechanism"/>
    <property type="evidence" value="ECO:0007669"/>
    <property type="project" value="UniProtKB-UniRule"/>
</dbReference>
<dbReference type="CDD" id="cd12152">
    <property type="entry name" value="F1-ATPase_delta"/>
    <property type="match status" value="1"/>
</dbReference>
<dbReference type="FunFam" id="2.60.15.10:FF:000022">
    <property type="entry name" value="ATP synthase epsilon chain, chloroplastic"/>
    <property type="match status" value="1"/>
</dbReference>
<dbReference type="Gene3D" id="6.10.140.480">
    <property type="match status" value="1"/>
</dbReference>
<dbReference type="Gene3D" id="2.60.15.10">
    <property type="entry name" value="F0F1 ATP synthase delta/epsilon subunit, N-terminal"/>
    <property type="match status" value="1"/>
</dbReference>
<dbReference type="HAMAP" id="MF_00530">
    <property type="entry name" value="ATP_synth_epsil_bac"/>
    <property type="match status" value="1"/>
</dbReference>
<dbReference type="InterPro" id="IPR001469">
    <property type="entry name" value="ATP_synth_F1_dsu/esu"/>
</dbReference>
<dbReference type="InterPro" id="IPR020546">
    <property type="entry name" value="ATP_synth_F1_dsu/esu_N"/>
</dbReference>
<dbReference type="InterPro" id="IPR020547">
    <property type="entry name" value="ATP_synth_F1_esu_C"/>
</dbReference>
<dbReference type="InterPro" id="IPR036771">
    <property type="entry name" value="ATPsynth_dsu/esu_N"/>
</dbReference>
<dbReference type="NCBIfam" id="TIGR01216">
    <property type="entry name" value="ATP_synt_epsi"/>
    <property type="match status" value="1"/>
</dbReference>
<dbReference type="PANTHER" id="PTHR13822">
    <property type="entry name" value="ATP SYNTHASE DELTA/EPSILON CHAIN"/>
    <property type="match status" value="1"/>
</dbReference>
<dbReference type="PANTHER" id="PTHR13822:SF10">
    <property type="entry name" value="ATP SYNTHASE EPSILON CHAIN, CHLOROPLASTIC"/>
    <property type="match status" value="1"/>
</dbReference>
<dbReference type="Pfam" id="PF00401">
    <property type="entry name" value="ATP-synt_DE"/>
    <property type="match status" value="1"/>
</dbReference>
<dbReference type="Pfam" id="PF02823">
    <property type="entry name" value="ATP-synt_DE_N"/>
    <property type="match status" value="1"/>
</dbReference>
<dbReference type="SUPFAM" id="SSF51344">
    <property type="entry name" value="Epsilon subunit of F1F0-ATP synthase N-terminal domain"/>
    <property type="match status" value="1"/>
</dbReference>
<comment type="function">
    <text evidence="1">Produces ATP from ADP in the presence of a proton gradient across the membrane.</text>
</comment>
<comment type="subunit">
    <text evidence="1">F-type ATPases have 2 components, CF(1) - the catalytic core - and CF(0) - the membrane proton channel. CF(1) has five subunits: alpha(3), beta(3), gamma(1), delta(1), epsilon(1). CF(0) has three main subunits: a, b and c.</text>
</comment>
<comment type="subcellular location">
    <subcellularLocation>
        <location evidence="1">Plastid</location>
        <location evidence="1">Chloroplast thylakoid membrane</location>
        <topology evidence="1">Peripheral membrane protein</topology>
    </subcellularLocation>
</comment>
<comment type="similarity">
    <text evidence="1">Belongs to the ATPase epsilon chain family.</text>
</comment>
<gene>
    <name evidence="1" type="primary">atpE</name>
</gene>
<proteinExistence type="inferred from homology"/>
<reference key="1">
    <citation type="journal article" date="2007" name="Mol. Genet. Genomics">
        <title>Chloroplast genomes of the diatoms Phaeodactylum tricornutum and Thalassiosira pseudonana: comparison with other plastid genomes of the red lineage.</title>
        <authorList>
            <person name="Oudot-Le Secq M.-P."/>
            <person name="Grimwood J."/>
            <person name="Shapiro H."/>
            <person name="Armbrust E.V."/>
            <person name="Bowler C."/>
            <person name="Green B.R."/>
        </authorList>
    </citation>
    <scope>NUCLEOTIDE SEQUENCE [LARGE SCALE GENOMIC DNA]</scope>
    <source>
        <strain>CCAP 1055/1</strain>
    </source>
</reference>
<feature type="chain" id="PRO_0000275226" description="ATP synthase epsilon chain, chloroplastic">
    <location>
        <begin position="1"/>
        <end position="133"/>
    </location>
</feature>
<organism>
    <name type="scientific">Phaeodactylum tricornutum (strain CCAP 1055/1)</name>
    <dbReference type="NCBI Taxonomy" id="556484"/>
    <lineage>
        <taxon>Eukaryota</taxon>
        <taxon>Sar</taxon>
        <taxon>Stramenopiles</taxon>
        <taxon>Ochrophyta</taxon>
        <taxon>Bacillariophyta</taxon>
        <taxon>Bacillariophyceae</taxon>
        <taxon>Bacillariophycidae</taxon>
        <taxon>Naviculales</taxon>
        <taxon>Phaeodactylaceae</taxon>
        <taxon>Phaeodactylum</taxon>
    </lineage>
</organism>
<keyword id="KW-0066">ATP synthesis</keyword>
<keyword id="KW-0139">CF(1)</keyword>
<keyword id="KW-0150">Chloroplast</keyword>
<keyword id="KW-0375">Hydrogen ion transport</keyword>
<keyword id="KW-0406">Ion transport</keyword>
<keyword id="KW-0472">Membrane</keyword>
<keyword id="KW-0934">Plastid</keyword>
<keyword id="KW-1185">Reference proteome</keyword>
<keyword id="KW-0793">Thylakoid</keyword>
<keyword id="KW-0813">Transport</keyword>
<evidence type="ECO:0000255" key="1">
    <source>
        <dbReference type="HAMAP-Rule" id="MF_00530"/>
    </source>
</evidence>